<accession>Q6RVA9</accession>
<accession>Q0PHA2</accession>
<accession>Q2QLE1</accession>
<comment type="function">
    <text evidence="4 5">May act as a scaffolding protein within caveolar membranes. Forms a stable heterooligomeric complex with CAV2 that targets to lipid rafts and drives caveolae formation. Mediates the recruitment of CAVIN proteins (CAVIN1/2/3/4) to the caveolae (By similarity). Interacts directly with G-protein alpha subunits and can functionally regulate their activity (By similarity). Involved in the costimulatory signal essential for T-cell receptor (TCR)-mediated T-cell activation. Its binding to DPP4 induces T-cell proliferation and NF-kappa-B activation in a T-cell receptor/CD3-dependent manner (By similarity). Recruits CTNNB1 to caveolar membranes and may regulate CTNNB1-mediated signaling through the Wnt pathway (By similarity). Negatively regulates TGFB1-mediated activation of SMAD2/3 by mediating the internalization of TGFBR1 from membrane rafts leading to its subsequent degradation (By similarity). Binds 20(S)-hydroxycholesterol (20(S)-OHC) (By similarity).</text>
</comment>
<comment type="subunit">
    <text evidence="3 4 5 6">Homooligomer. Interacts with GLIPR2. Interacts with NOSTRIN (By similarity). Interacts with SNAP25 and STX1A (By similarity). Interacts (via the N-terminus) with DPP4; the interaction is direct (By similarity). Interacts with CTNNB1, CDH1 and JUP. Interacts with PACSIN2; this interaction induces membrane tubulation (By similarity). Interacts with SLC7A9 (By similarity). Interacts with BMX and BTK. Interacts with TGFBR1. Interacts with CAVIN3 (via leucine-zipper domain) in a cholesterol-sensitive manner. Interacts with CAVIN1. Interacts with EHD2 in a cholesterol-dependent manner. Forms a ternary complex with UBXN6 and VCP; mediates CAV1 targeting to lysosomes for degradation. Interacts with ABCG1; this interaction regulates ABCG1-mediated cholesterol efflux (By similarity). Interacts with NEU3; this interaction enhances NEU3 sialidase activity within caveola. Interacts (via C-terminus) with SPRY1, SPRY2 (via C-terminus), SPRY3, and SPRY4 (By similarity). Interacts with IGFBP5; this interaction allows trafficking of IGFBP5 from the plasma membrane to the nucleus (By similarity).</text>
</comment>
<comment type="subcellular location">
    <subcellularLocation>
        <location evidence="1">Golgi apparatus membrane</location>
        <topology evidence="1">Peripheral membrane protein</topology>
    </subcellularLocation>
    <subcellularLocation>
        <location evidence="1">Cell membrane</location>
        <topology evidence="1">Peripheral membrane protein</topology>
    </subcellularLocation>
    <subcellularLocation>
        <location evidence="4">Membrane</location>
        <location evidence="4">Caveola</location>
        <topology evidence="1">Peripheral membrane protein</topology>
    </subcellularLocation>
    <subcellularLocation>
        <location evidence="5">Membrane raft</location>
    </subcellularLocation>
    <text evidence="1">Colocalized with DPP4 in membrane rafts. Potential hairpin-like structure in the membrane. Membrane protein of caveolae (By similarity).</text>
</comment>
<comment type="PTM">
    <text evidence="5">Phosphorylated at Tyr-14 by ABL1 in response to oxidative stress.</text>
</comment>
<comment type="PTM">
    <text evidence="5">Ubiquitinated. Undergo monoubiquitination and multi- and/or polyubiquitination. Monoubiquitination of N-terminal lysines promotes integration in a ternary complex with UBXN6 and VCP which promotes oligomeric CAV1 targeting to lysosomes for degradation. Ubiquitinated by ZNRF1; leading to degradation and modulation of the TLR4-mediated immune response.</text>
</comment>
<comment type="similarity">
    <text evidence="7">Belongs to the caveolin family.</text>
</comment>
<gene>
    <name evidence="8" type="primary">CAV1</name>
</gene>
<name>CAV1_PIG</name>
<dbReference type="EMBL" id="AY490204">
    <property type="protein sequence ID" value="AAR92481.1"/>
    <property type="molecule type" value="mRNA"/>
</dbReference>
<dbReference type="EMBL" id="DQ835010">
    <property type="protein sequence ID" value="ABH03043.1"/>
    <property type="molecule type" value="mRNA"/>
</dbReference>
<dbReference type="EMBL" id="DP000017">
    <property type="protein sequence ID" value="AAR16300.1"/>
    <property type="molecule type" value="Genomic_DNA"/>
</dbReference>
<dbReference type="RefSeq" id="NP_001335864.1">
    <property type="nucleotide sequence ID" value="NM_001348935.1"/>
</dbReference>
<dbReference type="RefSeq" id="NP_999603.1">
    <property type="nucleotide sequence ID" value="NM_214438.2"/>
</dbReference>
<dbReference type="FunCoup" id="Q6RVA9">
    <property type="interactions" value="448"/>
</dbReference>
<dbReference type="IntAct" id="Q6RVA9">
    <property type="interactions" value="1"/>
</dbReference>
<dbReference type="STRING" id="9823.ENSSSCP00000031700"/>
<dbReference type="iPTMnet" id="Q6RVA9"/>
<dbReference type="PaxDb" id="9823-ENSSSCP00000017622"/>
<dbReference type="PeptideAtlas" id="Q6RVA9"/>
<dbReference type="Ensembl" id="ENSSSCT00085001898">
    <property type="protein sequence ID" value="ENSSSCP00085001420"/>
    <property type="gene ID" value="ENSSSCG00085001291"/>
</dbReference>
<dbReference type="Ensembl" id="ENSSSCT00090001262">
    <property type="protein sequence ID" value="ENSSSCP00090000701"/>
    <property type="gene ID" value="ENSSSCG00090000815"/>
</dbReference>
<dbReference type="Ensembl" id="ENSSSCT00105012657">
    <property type="protein sequence ID" value="ENSSSCP00105009394"/>
    <property type="gene ID" value="ENSSSCG00105006183"/>
</dbReference>
<dbReference type="Ensembl" id="ENSSSCT00110069219">
    <property type="protein sequence ID" value="ENSSSCP00110048766"/>
    <property type="gene ID" value="ENSSSCG00110036389"/>
</dbReference>
<dbReference type="Ensembl" id="ENSSSCT00115022181">
    <property type="protein sequence ID" value="ENSSSCP00115021013"/>
    <property type="gene ID" value="ENSSSCG00115012842"/>
</dbReference>
<dbReference type="Ensembl" id="ENSSSCT00130009877">
    <property type="protein sequence ID" value="ENSSSCP00130006548"/>
    <property type="gene ID" value="ENSSSCG00130005297"/>
</dbReference>
<dbReference type="GeneID" id="404693"/>
<dbReference type="KEGG" id="ssc:404693"/>
<dbReference type="CTD" id="857"/>
<dbReference type="eggNOG" id="ENOG502QUK5">
    <property type="taxonomic scope" value="Eukaryota"/>
</dbReference>
<dbReference type="HOGENOM" id="CLU_102582_0_0_1"/>
<dbReference type="InParanoid" id="Q6RVA9"/>
<dbReference type="OrthoDB" id="5917823at2759"/>
<dbReference type="TreeFam" id="TF315736"/>
<dbReference type="Proteomes" id="UP000008227">
    <property type="component" value="Unplaced"/>
</dbReference>
<dbReference type="Proteomes" id="UP000314985">
    <property type="component" value="Unplaced"/>
</dbReference>
<dbReference type="Proteomes" id="UP000694570">
    <property type="component" value="Unplaced"/>
</dbReference>
<dbReference type="Proteomes" id="UP000694571">
    <property type="component" value="Unplaced"/>
</dbReference>
<dbReference type="Proteomes" id="UP000694720">
    <property type="component" value="Unplaced"/>
</dbReference>
<dbReference type="Proteomes" id="UP000694722">
    <property type="component" value="Unplaced"/>
</dbReference>
<dbReference type="Proteomes" id="UP000694723">
    <property type="component" value="Unplaced"/>
</dbReference>
<dbReference type="Proteomes" id="UP000694724">
    <property type="component" value="Unplaced"/>
</dbReference>
<dbReference type="Proteomes" id="UP000694725">
    <property type="component" value="Unplaced"/>
</dbReference>
<dbReference type="Proteomes" id="UP000694726">
    <property type="component" value="Unplaced"/>
</dbReference>
<dbReference type="Proteomes" id="UP000694727">
    <property type="component" value="Unplaced"/>
</dbReference>
<dbReference type="Proteomes" id="UP000694728">
    <property type="component" value="Unplaced"/>
</dbReference>
<dbReference type="GO" id="GO:0005901">
    <property type="term" value="C:caveola"/>
    <property type="evidence" value="ECO:0000314"/>
    <property type="project" value="AgBase"/>
</dbReference>
<dbReference type="GO" id="GO:0031410">
    <property type="term" value="C:cytoplasmic vesicle"/>
    <property type="evidence" value="ECO:0000318"/>
    <property type="project" value="GO_Central"/>
</dbReference>
<dbReference type="GO" id="GO:0005783">
    <property type="term" value="C:endoplasmic reticulum"/>
    <property type="evidence" value="ECO:0000250"/>
    <property type="project" value="HGNC-UCL"/>
</dbReference>
<dbReference type="GO" id="GO:0005768">
    <property type="term" value="C:endosome"/>
    <property type="evidence" value="ECO:0000250"/>
    <property type="project" value="UniProtKB"/>
</dbReference>
<dbReference type="GO" id="GO:0005794">
    <property type="term" value="C:Golgi apparatus"/>
    <property type="evidence" value="ECO:0000318"/>
    <property type="project" value="GO_Central"/>
</dbReference>
<dbReference type="GO" id="GO:0000139">
    <property type="term" value="C:Golgi membrane"/>
    <property type="evidence" value="ECO:0000250"/>
    <property type="project" value="HGNC-UCL"/>
</dbReference>
<dbReference type="GO" id="GO:0045121">
    <property type="term" value="C:membrane raft"/>
    <property type="evidence" value="ECO:0000250"/>
    <property type="project" value="HGNC-UCL"/>
</dbReference>
<dbReference type="GO" id="GO:0048471">
    <property type="term" value="C:perinuclear region of cytoplasm"/>
    <property type="evidence" value="ECO:0000318"/>
    <property type="project" value="GO_Central"/>
</dbReference>
<dbReference type="GO" id="GO:0005886">
    <property type="term" value="C:plasma membrane"/>
    <property type="evidence" value="ECO:0000314"/>
    <property type="project" value="AgBase"/>
</dbReference>
<dbReference type="GO" id="GO:0060090">
    <property type="term" value="F:molecular adaptor activity"/>
    <property type="evidence" value="ECO:0000318"/>
    <property type="project" value="GO_Central"/>
</dbReference>
<dbReference type="GO" id="GO:0008142">
    <property type="term" value="F:oxysterol binding"/>
    <property type="evidence" value="ECO:0000250"/>
    <property type="project" value="UniProtKB"/>
</dbReference>
<dbReference type="GO" id="GO:0019901">
    <property type="term" value="F:protein kinase binding"/>
    <property type="evidence" value="ECO:0000318"/>
    <property type="project" value="GO_Central"/>
</dbReference>
<dbReference type="GO" id="GO:0044325">
    <property type="term" value="F:transmembrane transporter binding"/>
    <property type="evidence" value="ECO:0000318"/>
    <property type="project" value="GO_Central"/>
</dbReference>
<dbReference type="GO" id="GO:0070836">
    <property type="term" value="P:caveola assembly"/>
    <property type="evidence" value="ECO:0000318"/>
    <property type="project" value="GO_Central"/>
</dbReference>
<dbReference type="GO" id="GO:0030154">
    <property type="term" value="P:cell differentiation"/>
    <property type="evidence" value="ECO:0000318"/>
    <property type="project" value="GO_Central"/>
</dbReference>
<dbReference type="GO" id="GO:0001937">
    <property type="term" value="P:negative regulation of endothelial cell proliferation"/>
    <property type="evidence" value="ECO:0000318"/>
    <property type="project" value="GO_Central"/>
</dbReference>
<dbReference type="GO" id="GO:0031623">
    <property type="term" value="P:receptor internalization"/>
    <property type="evidence" value="ECO:0000250"/>
    <property type="project" value="UniProtKB"/>
</dbReference>
<dbReference type="GO" id="GO:0051480">
    <property type="term" value="P:regulation of cytosolic calcium ion concentration"/>
    <property type="evidence" value="ECO:0000318"/>
    <property type="project" value="GO_Central"/>
</dbReference>
<dbReference type="GO" id="GO:0031295">
    <property type="term" value="P:T cell costimulation"/>
    <property type="evidence" value="ECO:0000250"/>
    <property type="project" value="UniProtKB"/>
</dbReference>
<dbReference type="InterPro" id="IPR001612">
    <property type="entry name" value="Caveolin"/>
</dbReference>
<dbReference type="InterPro" id="IPR018361">
    <property type="entry name" value="Caveolin_CS"/>
</dbReference>
<dbReference type="PANTHER" id="PTHR10844">
    <property type="entry name" value="CAVEOLIN"/>
    <property type="match status" value="1"/>
</dbReference>
<dbReference type="PANTHER" id="PTHR10844:SF18">
    <property type="entry name" value="CAVEOLIN-1"/>
    <property type="match status" value="1"/>
</dbReference>
<dbReference type="Pfam" id="PF01146">
    <property type="entry name" value="Caveolin"/>
    <property type="match status" value="1"/>
</dbReference>
<dbReference type="PROSITE" id="PS01210">
    <property type="entry name" value="CAVEOLIN"/>
    <property type="match status" value="1"/>
</dbReference>
<sequence length="178" mass="20625">MSGGKYVDSEGHLYTVPIREQGNIYKPNNKAMAEEMNEKQVYDAHTKEIDLVNRDPKHLNDDVVKIDFEDVIAEPEGTHSFDGIWKASFTTFTVTKYWFYRLLSALFGIPMALIWGIYFAILSFLHIWAVVPCIKSFLIEIQCISRVYSIYVHTFCDPLFEAIGKIFSNIRINMQKEI</sequence>
<feature type="initiator methionine" description="Removed" evidence="5">
    <location>
        <position position="1"/>
    </location>
</feature>
<feature type="chain" id="PRO_0000144134" description="Caveolin-1">
    <location>
        <begin position="2"/>
        <end position="178"/>
    </location>
</feature>
<feature type="topological domain" description="Cytoplasmic" evidence="7">
    <location>
        <begin position="2"/>
        <end position="104"/>
    </location>
</feature>
<feature type="intramembrane region" description="Helical" evidence="7">
    <location>
        <begin position="105"/>
        <end position="125"/>
    </location>
</feature>
<feature type="topological domain" description="Cytoplasmic" evidence="7">
    <location>
        <begin position="126"/>
        <end position="178"/>
    </location>
</feature>
<feature type="region of interest" description="Required for homooligomerization" evidence="5">
    <location>
        <begin position="2"/>
        <end position="94"/>
    </location>
</feature>
<feature type="region of interest" description="Interaction with CAVIN3" evidence="5">
    <location>
        <begin position="82"/>
        <end position="94"/>
    </location>
</feature>
<feature type="region of interest" description="Interacts with SPRY1, SPRY2, SPRY3 and SPRY4" evidence="4">
    <location>
        <begin position="131"/>
        <end position="142"/>
    </location>
</feature>
<feature type="region of interest" description="Interacts with SPRY1, SPRY2, and SPRY4" evidence="4">
    <location>
        <begin position="149"/>
        <end position="160"/>
    </location>
</feature>
<feature type="region of interest" description="Interacts with SPRY1, SPRY2, SPRY3 and SPRY4" evidence="4">
    <location>
        <begin position="167"/>
        <end position="178"/>
    </location>
</feature>
<feature type="modified residue" description="N-acetylserine" evidence="5">
    <location>
        <position position="2"/>
    </location>
</feature>
<feature type="modified residue" description="Phosphoserine" evidence="3">
    <location>
        <position position="2"/>
    </location>
</feature>
<feature type="modified residue" description="N6-acetyllysine; alternate" evidence="5">
    <location>
        <position position="5"/>
    </location>
</feature>
<feature type="modified residue" description="Phosphotyrosine" evidence="5">
    <location>
        <position position="6"/>
    </location>
</feature>
<feature type="modified residue" description="Phosphoserine" evidence="4">
    <location>
        <position position="9"/>
    </location>
</feature>
<feature type="modified residue" description="Phosphotyrosine; by ABL1" evidence="4">
    <location>
        <position position="14"/>
    </location>
</feature>
<feature type="modified residue" description="Phosphotyrosine" evidence="5">
    <location>
        <position position="25"/>
    </location>
</feature>
<feature type="lipid moiety-binding region" description="S-palmitoyl cysteine" evidence="2">
    <location>
        <position position="133"/>
    </location>
</feature>
<feature type="lipid moiety-binding region" description="S-palmitoyl cysteine" evidence="2">
    <location>
        <position position="143"/>
    </location>
</feature>
<feature type="lipid moiety-binding region" description="S-palmitoyl cysteine" evidence="2">
    <location>
        <position position="156"/>
    </location>
</feature>
<feature type="cross-link" description="Glycyl lysine isopeptide (Lys-Gly) (interchain with G-Cter in ubiquitin); alternate" evidence="5">
    <location>
        <position position="5"/>
    </location>
</feature>
<feature type="cross-link" description="Glycyl lysine isopeptide (Lys-Gly) (interchain with G-Cter in ubiquitin)" evidence="5">
    <location>
        <position position="26"/>
    </location>
</feature>
<feature type="cross-link" description="Glycyl lysine isopeptide (Lys-Gly) (interchain with G-Cter in ubiquitin)" evidence="5">
    <location>
        <position position="30"/>
    </location>
</feature>
<feature type="cross-link" description="Glycyl lysine isopeptide (Lys-Gly) (interchain with G-Cter in ubiquitin)" evidence="5">
    <location>
        <position position="39"/>
    </location>
</feature>
<feature type="cross-link" description="Glycyl lysine isopeptide (Lys-Gly) (interchain with G-Cter in ubiquitin)" evidence="5">
    <location>
        <position position="47"/>
    </location>
</feature>
<feature type="cross-link" description="Glycyl lysine isopeptide (Lys-Gly) (interchain with G-Cter in ubiquitin)" evidence="5">
    <location>
        <position position="57"/>
    </location>
</feature>
<proteinExistence type="evidence at transcript level"/>
<protein>
    <recommendedName>
        <fullName>Caveolin-1</fullName>
    </recommendedName>
</protein>
<evidence type="ECO:0000250" key="1"/>
<evidence type="ECO:0000250" key="2">
    <source>
        <dbReference type="UniProtKB" id="P33724"/>
    </source>
</evidence>
<evidence type="ECO:0000250" key="3">
    <source>
        <dbReference type="UniProtKB" id="P41350"/>
    </source>
</evidence>
<evidence type="ECO:0000250" key="4">
    <source>
        <dbReference type="UniProtKB" id="P49817"/>
    </source>
</evidence>
<evidence type="ECO:0000250" key="5">
    <source>
        <dbReference type="UniProtKB" id="Q03135"/>
    </source>
</evidence>
<evidence type="ECO:0000250" key="6">
    <source>
        <dbReference type="UniProtKB" id="Q2IBA5"/>
    </source>
</evidence>
<evidence type="ECO:0000255" key="7"/>
<evidence type="ECO:0000312" key="8">
    <source>
        <dbReference type="EMBL" id="AAR92481.1"/>
    </source>
</evidence>
<organism>
    <name type="scientific">Sus scrofa</name>
    <name type="common">Pig</name>
    <dbReference type="NCBI Taxonomy" id="9823"/>
    <lineage>
        <taxon>Eukaryota</taxon>
        <taxon>Metazoa</taxon>
        <taxon>Chordata</taxon>
        <taxon>Craniata</taxon>
        <taxon>Vertebrata</taxon>
        <taxon>Euteleostomi</taxon>
        <taxon>Mammalia</taxon>
        <taxon>Eutheria</taxon>
        <taxon>Laurasiatheria</taxon>
        <taxon>Artiodactyla</taxon>
        <taxon>Suina</taxon>
        <taxon>Suidae</taxon>
        <taxon>Sus</taxon>
    </lineage>
</organism>
<reference evidence="8" key="1">
    <citation type="submission" date="2003-11" db="EMBL/GenBank/DDBJ databases">
        <title>Cloning and expression of cav-1 in pig.</title>
        <authorList>
            <person name="Tian X."/>
            <person name="Li J."/>
            <person name="Wang C."/>
            <person name="Chen Y."/>
        </authorList>
    </citation>
    <scope>NUCLEOTIDE SEQUENCE [MRNA]</scope>
    <source>
        <tissue>Muscle</tissue>
    </source>
</reference>
<reference evidence="8" key="2">
    <citation type="submission" date="2006-07" db="EMBL/GenBank/DDBJ databases">
        <title>Cloning and expression analysis of pig caveolin 1 gene.</title>
        <authorList>
            <person name="Mei Y."/>
            <person name="Li J."/>
            <person name="Wang C."/>
            <person name="Chen Y."/>
            <person name="Tian X."/>
        </authorList>
    </citation>
    <scope>NUCLEOTIDE SEQUENCE [MRNA]</scope>
</reference>
<reference key="3">
    <citation type="journal article" date="2003" name="Nature">
        <title>Comparative analyses of multi-species sequences from targeted genomic regions.</title>
        <authorList>
            <person name="Thomas J.W."/>
            <person name="Touchman J.W."/>
            <person name="Blakesley R.W."/>
            <person name="Bouffard G.G."/>
            <person name="Beckstrom-Sternberg S.M."/>
            <person name="Margulies E.H."/>
            <person name="Blanchette M."/>
            <person name="Siepel A.C."/>
            <person name="Thomas P.J."/>
            <person name="McDowell J.C."/>
            <person name="Maskeri B."/>
            <person name="Hansen N.F."/>
            <person name="Schwartz M.S."/>
            <person name="Weber R.J."/>
            <person name="Kent W.J."/>
            <person name="Karolchik D."/>
            <person name="Bruen T.C."/>
            <person name="Bevan R."/>
            <person name="Cutler D.J."/>
            <person name="Schwartz S."/>
            <person name="Elnitski L."/>
            <person name="Idol J.R."/>
            <person name="Prasad A.B."/>
            <person name="Lee-Lin S.-Q."/>
            <person name="Maduro V.V.B."/>
            <person name="Summers T.J."/>
            <person name="Portnoy M.E."/>
            <person name="Dietrich N.L."/>
            <person name="Akhter N."/>
            <person name="Ayele K."/>
            <person name="Benjamin B."/>
            <person name="Cariaga K."/>
            <person name="Brinkley C.P."/>
            <person name="Brooks S.Y."/>
            <person name="Granite S."/>
            <person name="Guan X."/>
            <person name="Gupta J."/>
            <person name="Haghighi P."/>
            <person name="Ho S.-L."/>
            <person name="Huang M.C."/>
            <person name="Karlins E."/>
            <person name="Laric P.L."/>
            <person name="Legaspi R."/>
            <person name="Lim M.J."/>
            <person name="Maduro Q.L."/>
            <person name="Masiello C.A."/>
            <person name="Mastrian S.D."/>
            <person name="McCloskey J.C."/>
            <person name="Pearson R."/>
            <person name="Stantripop S."/>
            <person name="Tiongson E.E."/>
            <person name="Tran J.T."/>
            <person name="Tsurgeon C."/>
            <person name="Vogt J.L."/>
            <person name="Walker M.A."/>
            <person name="Wetherby K.D."/>
            <person name="Wiggins L.S."/>
            <person name="Young A.C."/>
            <person name="Zhang L.-H."/>
            <person name="Osoegawa K."/>
            <person name="Zhu B."/>
            <person name="Zhao B."/>
            <person name="Shu C.L."/>
            <person name="De Jong P.J."/>
            <person name="Lawrence C.E."/>
            <person name="Smit A.F."/>
            <person name="Chakravarti A."/>
            <person name="Haussler D."/>
            <person name="Green P."/>
            <person name="Miller W."/>
            <person name="Green E.D."/>
        </authorList>
    </citation>
    <scope>NUCLEOTIDE SEQUENCE [LARGE SCALE GENOMIC DNA]</scope>
</reference>
<keyword id="KW-0007">Acetylation</keyword>
<keyword id="KW-1003">Cell membrane</keyword>
<keyword id="KW-0333">Golgi apparatus</keyword>
<keyword id="KW-1017">Isopeptide bond</keyword>
<keyword id="KW-0449">Lipoprotein</keyword>
<keyword id="KW-0472">Membrane</keyword>
<keyword id="KW-0564">Palmitate</keyword>
<keyword id="KW-0597">Phosphoprotein</keyword>
<keyword id="KW-1185">Reference proteome</keyword>
<keyword id="KW-0832">Ubl conjugation</keyword>